<feature type="chain" id="PRO_0000392859" description="Dermonecrotic toxin LspiSicTox-betaIE2i">
    <location>
        <begin position="1" status="less than"/>
        <end position="278"/>
    </location>
</feature>
<feature type="active site" evidence="6">
    <location>
        <position position="5"/>
    </location>
</feature>
<feature type="active site" description="Nucleophile" evidence="6">
    <location>
        <position position="41"/>
    </location>
</feature>
<feature type="binding site" evidence="6">
    <location>
        <position position="25"/>
    </location>
    <ligand>
        <name>Mg(2+)</name>
        <dbReference type="ChEBI" id="CHEBI:18420"/>
    </ligand>
</feature>
<feature type="binding site" evidence="6">
    <location>
        <position position="27"/>
    </location>
    <ligand>
        <name>Mg(2+)</name>
        <dbReference type="ChEBI" id="CHEBI:18420"/>
    </ligand>
</feature>
<feature type="binding site" evidence="1">
    <location>
        <position position="85"/>
    </location>
    <ligand>
        <name>Mg(2+)</name>
        <dbReference type="ChEBI" id="CHEBI:18420"/>
    </ligand>
</feature>
<feature type="disulfide bond" evidence="4">
    <location>
        <begin position="45"/>
        <end position="51"/>
    </location>
</feature>
<feature type="disulfide bond" evidence="4">
    <location>
        <begin position="47"/>
        <end position="190"/>
    </location>
</feature>
<feature type="non-terminal residue">
    <location>
        <position position="1"/>
    </location>
</feature>
<proteinExistence type="evidence at transcript level"/>
<keyword id="KW-0204">Cytolysis</keyword>
<keyword id="KW-1061">Dermonecrotic toxin</keyword>
<keyword id="KW-1015">Disulfide bond</keyword>
<keyword id="KW-0354">Hemolysis</keyword>
<keyword id="KW-0442">Lipid degradation</keyword>
<keyword id="KW-0443">Lipid metabolism</keyword>
<keyword id="KW-0456">Lyase</keyword>
<keyword id="KW-0460">Magnesium</keyword>
<keyword id="KW-0479">Metal-binding</keyword>
<keyword id="KW-0964">Secreted</keyword>
<keyword id="KW-0800">Toxin</keyword>
<accession>C0JB41</accession>
<dbReference type="EC" id="4.6.1.-" evidence="5"/>
<dbReference type="EMBL" id="FJ171476">
    <property type="protein sequence ID" value="ACN48972.1"/>
    <property type="molecule type" value="mRNA"/>
</dbReference>
<dbReference type="SMR" id="C0JB41"/>
<dbReference type="GO" id="GO:0005576">
    <property type="term" value="C:extracellular region"/>
    <property type="evidence" value="ECO:0007669"/>
    <property type="project" value="UniProtKB-SubCell"/>
</dbReference>
<dbReference type="GO" id="GO:0016829">
    <property type="term" value="F:lyase activity"/>
    <property type="evidence" value="ECO:0007669"/>
    <property type="project" value="UniProtKB-KW"/>
</dbReference>
<dbReference type="GO" id="GO:0046872">
    <property type="term" value="F:metal ion binding"/>
    <property type="evidence" value="ECO:0007669"/>
    <property type="project" value="UniProtKB-KW"/>
</dbReference>
<dbReference type="GO" id="GO:0008081">
    <property type="term" value="F:phosphoric diester hydrolase activity"/>
    <property type="evidence" value="ECO:0007669"/>
    <property type="project" value="InterPro"/>
</dbReference>
<dbReference type="GO" id="GO:0090729">
    <property type="term" value="F:toxin activity"/>
    <property type="evidence" value="ECO:0007669"/>
    <property type="project" value="UniProtKB-KW"/>
</dbReference>
<dbReference type="GO" id="GO:0031640">
    <property type="term" value="P:killing of cells of another organism"/>
    <property type="evidence" value="ECO:0007669"/>
    <property type="project" value="UniProtKB-KW"/>
</dbReference>
<dbReference type="GO" id="GO:0016042">
    <property type="term" value="P:lipid catabolic process"/>
    <property type="evidence" value="ECO:0007669"/>
    <property type="project" value="UniProtKB-KW"/>
</dbReference>
<dbReference type="CDD" id="cd08576">
    <property type="entry name" value="GDPD_like_SMaseD_PLD"/>
    <property type="match status" value="1"/>
</dbReference>
<dbReference type="Gene3D" id="3.20.20.190">
    <property type="entry name" value="Phosphatidylinositol (PI) phosphodiesterase"/>
    <property type="match status" value="1"/>
</dbReference>
<dbReference type="InterPro" id="IPR017946">
    <property type="entry name" value="PLC-like_Pdiesterase_TIM-brl"/>
</dbReference>
<dbReference type="SUPFAM" id="SSF51695">
    <property type="entry name" value="PLC-like phosphodiesterases"/>
    <property type="match status" value="1"/>
</dbReference>
<reference key="1">
    <citation type="journal article" date="2009" name="Mol. Biol. Evol.">
        <title>Molecular evolution, functional variation, and proposed nomenclature of the gene family that includes sphingomyelinase D in sicariid spider venoms.</title>
        <authorList>
            <person name="Binford G.J."/>
            <person name="Bodner M.R."/>
            <person name="Cordes M.H."/>
            <person name="Baldwin K.L."/>
            <person name="Rynerson M.R."/>
            <person name="Burns S.N."/>
            <person name="Zobel-Thropp P.A."/>
        </authorList>
    </citation>
    <scope>NUCLEOTIDE SEQUENCE [MRNA]</scope>
    <scope>NOMENCLATURE</scope>
    <source>
        <strain>Borakalalo</strain>
        <tissue>Venom gland</tissue>
    </source>
</reference>
<name>B1S1_LOXSN</name>
<evidence type="ECO:0000250" key="1"/>
<evidence type="ECO:0000250" key="2">
    <source>
        <dbReference type="UniProtKB" id="A0A0D4WTV1"/>
    </source>
</evidence>
<evidence type="ECO:0000250" key="3">
    <source>
        <dbReference type="UniProtKB" id="A0A0D4WV12"/>
    </source>
</evidence>
<evidence type="ECO:0000250" key="4">
    <source>
        <dbReference type="UniProtKB" id="P0CE80"/>
    </source>
</evidence>
<evidence type="ECO:0000250" key="5">
    <source>
        <dbReference type="UniProtKB" id="Q4ZFU2"/>
    </source>
</evidence>
<evidence type="ECO:0000250" key="6">
    <source>
        <dbReference type="UniProtKB" id="Q8I914"/>
    </source>
</evidence>
<evidence type="ECO:0000303" key="7">
    <source>
    </source>
</evidence>
<evidence type="ECO:0000305" key="8"/>
<evidence type="ECO:0000305" key="9">
    <source>
    </source>
</evidence>
<comment type="function">
    <text evidence="2 4">Dermonecrotic toxins cleave the phosphodiester linkage between the phosphate and headgroup of certain phospholipids (sphingolipid and lysolipid substrates), forming an alcohol (often choline) and a cyclic phosphate (By similarity). This toxin acts on sphingomyelin (SM) (By similarity). It may also act on ceramide phosphoethanolamine (CPE), lysophosphatidylcholine (LPC) and lysophosphatidylethanolamine (LPE), but not on lysophosphatidylserine (LPS), and lysophosphatidylglycerol (LPG) (By similarity). It acts by transphosphatidylation, releasing exclusively cyclic phosphate products as second products (By similarity). Induces dermonecrosis, hemolysis, increased vascular permeability, edema, inflammatory response, and platelet aggregation (By similarity).</text>
</comment>
<comment type="catalytic activity">
    <reaction evidence="2">
        <text>an N-(acyl)-sphingosylphosphocholine = an N-(acyl)-sphingosyl-1,3-cyclic phosphate + choline</text>
        <dbReference type="Rhea" id="RHEA:60652"/>
        <dbReference type="ChEBI" id="CHEBI:15354"/>
        <dbReference type="ChEBI" id="CHEBI:64583"/>
        <dbReference type="ChEBI" id="CHEBI:143892"/>
    </reaction>
</comment>
<comment type="catalytic activity">
    <reaction evidence="2">
        <text>an N-(acyl)-sphingosylphosphoethanolamine = an N-(acyl)-sphingosyl-1,3-cyclic phosphate + ethanolamine</text>
        <dbReference type="Rhea" id="RHEA:60648"/>
        <dbReference type="ChEBI" id="CHEBI:57603"/>
        <dbReference type="ChEBI" id="CHEBI:143891"/>
        <dbReference type="ChEBI" id="CHEBI:143892"/>
    </reaction>
</comment>
<comment type="catalytic activity">
    <reaction evidence="2">
        <text>a 1-acyl-sn-glycero-3-phosphocholine = a 1-acyl-sn-glycero-2,3-cyclic phosphate + choline</text>
        <dbReference type="Rhea" id="RHEA:60700"/>
        <dbReference type="ChEBI" id="CHEBI:15354"/>
        <dbReference type="ChEBI" id="CHEBI:58168"/>
        <dbReference type="ChEBI" id="CHEBI:143947"/>
    </reaction>
</comment>
<comment type="catalytic activity">
    <reaction evidence="2">
        <text>a 1-acyl-sn-glycero-3-phosphoethanolamine = a 1-acyl-sn-glycero-2,3-cyclic phosphate + ethanolamine</text>
        <dbReference type="Rhea" id="RHEA:60704"/>
        <dbReference type="ChEBI" id="CHEBI:57603"/>
        <dbReference type="ChEBI" id="CHEBI:64381"/>
        <dbReference type="ChEBI" id="CHEBI:143947"/>
    </reaction>
</comment>
<comment type="cofactor">
    <cofactor evidence="6">
        <name>Mg(2+)</name>
        <dbReference type="ChEBI" id="CHEBI:18420"/>
    </cofactor>
    <text evidence="6">Binds 1 Mg(2+) ion per subunit.</text>
</comment>
<comment type="subcellular location">
    <subcellularLocation>
        <location evidence="9">Secreted</location>
    </subcellularLocation>
</comment>
<comment type="tissue specificity">
    <text evidence="9">Expressed by the venom gland.</text>
</comment>
<comment type="similarity">
    <text evidence="8">Belongs to the arthropod phospholipase D family. Class II subfamily.</text>
</comment>
<comment type="caution">
    <text evidence="2 3 5">The most common activity assay for dermonecrotic toxins detects enzymatic activity by monitoring choline release from substrate. Liberation of choline from sphingomyelin (SM) or lysophosphatidylcholine (LPC) is commonly assumed to result from substrate hydrolysis, giving either ceramide-1-phosphate (C1P) or lysophosphatidic acid (LPA), respectively, as a second product. However, two studies from Lajoie and colleagues (2013 and 2015) report the observation of exclusive formation of cyclic phosphate products as second products, resulting from intramolecular transphosphatidylation. Cyclic phosphates have vastly different biological properties from their monoester counterparts, and they may be relevant to the pathology of brown spider envenomation.</text>
</comment>
<organism>
    <name type="scientific">Loxosceles spinulosa</name>
    <name type="common">Recluse spider</name>
    <dbReference type="NCBI Taxonomy" id="571532"/>
    <lineage>
        <taxon>Eukaryota</taxon>
        <taxon>Metazoa</taxon>
        <taxon>Ecdysozoa</taxon>
        <taxon>Arthropoda</taxon>
        <taxon>Chelicerata</taxon>
        <taxon>Arachnida</taxon>
        <taxon>Araneae</taxon>
        <taxon>Araneomorphae</taxon>
        <taxon>Haplogynae</taxon>
        <taxon>Scytodoidea</taxon>
        <taxon>Sicariidae</taxon>
        <taxon>Loxosceles</taxon>
    </lineage>
</organism>
<sequence length="278" mass="31234">FALAHMVNDFDIMKSYLDEGANGIETDITFSPEGEPESAFHGVPCDCKRWCDRTVSFDSYLQKTSDLSTPGHPDYRENLLIIILELKLNGLSQDALANGGRRLADKLAAHFWTGGRRDQRATFVVSVPQTSQKVFMKTFREEMEAIGMGDMNAKVGFDFTDNGDVSVTKAVYDELGITEHIWASDGITNCVALLFRGTSRLEELIQKRDEGESTYISKVYAWTYDKETSVVLALELGVDGVMTNYADFVISILNKPEHSSKYRLATYEDDPFERFKAV</sequence>
<protein>
    <recommendedName>
        <fullName evidence="7">Dermonecrotic toxin LspiSicTox-betaIE2i</fullName>
        <ecNumber evidence="5">4.6.1.-</ecNumber>
    </recommendedName>
    <alternativeName>
        <fullName>Phospholipase D</fullName>
        <shortName>PLD</shortName>
    </alternativeName>
    <alternativeName>
        <fullName>Sphingomyelin phosphodiesterase D</fullName>
        <shortName>SMD</shortName>
        <shortName>SMase D</shortName>
        <shortName>Sphingomyelinase D</shortName>
    </alternativeName>
</protein>